<dbReference type="EC" id="1.1.1.267" evidence="1"/>
<dbReference type="EMBL" id="CP001172">
    <property type="protein sequence ID" value="ACJ57525.1"/>
    <property type="molecule type" value="Genomic_DNA"/>
</dbReference>
<dbReference type="PDB" id="4ZN6">
    <property type="method" value="X-ray"/>
    <property type="resolution" value="2.05 A"/>
    <property type="chains" value="A/B=1-398"/>
</dbReference>
<dbReference type="PDB" id="7S04">
    <property type="method" value="X-ray"/>
    <property type="resolution" value="2.52 A"/>
    <property type="chains" value="A=1-398"/>
</dbReference>
<dbReference type="PDBsum" id="4ZN6"/>
<dbReference type="PDBsum" id="7S04"/>
<dbReference type="SMR" id="B7H1U5"/>
<dbReference type="HOGENOM" id="CLU_035714_4_0_6"/>
<dbReference type="UniPathway" id="UPA00056">
    <property type="reaction ID" value="UER00092"/>
</dbReference>
<dbReference type="EvolutionaryTrace" id="B7H1U5"/>
<dbReference type="Proteomes" id="UP000006924">
    <property type="component" value="Chromosome"/>
</dbReference>
<dbReference type="GO" id="GO:0030604">
    <property type="term" value="F:1-deoxy-D-xylulose-5-phosphate reductoisomerase activity"/>
    <property type="evidence" value="ECO:0007669"/>
    <property type="project" value="UniProtKB-UniRule"/>
</dbReference>
<dbReference type="GO" id="GO:0030145">
    <property type="term" value="F:manganese ion binding"/>
    <property type="evidence" value="ECO:0007669"/>
    <property type="project" value="TreeGrafter"/>
</dbReference>
<dbReference type="GO" id="GO:0070402">
    <property type="term" value="F:NADPH binding"/>
    <property type="evidence" value="ECO:0007669"/>
    <property type="project" value="InterPro"/>
</dbReference>
<dbReference type="GO" id="GO:0051484">
    <property type="term" value="P:isopentenyl diphosphate biosynthetic process, methylerythritol 4-phosphate pathway involved in terpenoid biosynthetic process"/>
    <property type="evidence" value="ECO:0007669"/>
    <property type="project" value="TreeGrafter"/>
</dbReference>
<dbReference type="FunFam" id="3.40.50.720:FF:000045">
    <property type="entry name" value="1-deoxy-D-xylulose 5-phosphate reductoisomerase"/>
    <property type="match status" value="1"/>
</dbReference>
<dbReference type="Gene3D" id="1.10.1740.10">
    <property type="match status" value="1"/>
</dbReference>
<dbReference type="Gene3D" id="3.40.50.720">
    <property type="entry name" value="NAD(P)-binding Rossmann-like Domain"/>
    <property type="match status" value="1"/>
</dbReference>
<dbReference type="HAMAP" id="MF_00183">
    <property type="entry name" value="DXP_reductoisom"/>
    <property type="match status" value="1"/>
</dbReference>
<dbReference type="InterPro" id="IPR003821">
    <property type="entry name" value="DXP_reductoisomerase"/>
</dbReference>
<dbReference type="InterPro" id="IPR013644">
    <property type="entry name" value="DXP_reductoisomerase_C"/>
</dbReference>
<dbReference type="InterPro" id="IPR013512">
    <property type="entry name" value="DXP_reductoisomerase_N"/>
</dbReference>
<dbReference type="InterPro" id="IPR026877">
    <property type="entry name" value="DXPR_C"/>
</dbReference>
<dbReference type="InterPro" id="IPR036169">
    <property type="entry name" value="DXPR_C_sf"/>
</dbReference>
<dbReference type="InterPro" id="IPR036291">
    <property type="entry name" value="NAD(P)-bd_dom_sf"/>
</dbReference>
<dbReference type="NCBIfam" id="TIGR00243">
    <property type="entry name" value="Dxr"/>
    <property type="match status" value="1"/>
</dbReference>
<dbReference type="NCBIfam" id="NF003938">
    <property type="entry name" value="PRK05447.1-1"/>
    <property type="match status" value="1"/>
</dbReference>
<dbReference type="NCBIfam" id="NF009114">
    <property type="entry name" value="PRK12464.1"/>
    <property type="match status" value="1"/>
</dbReference>
<dbReference type="PANTHER" id="PTHR30525">
    <property type="entry name" value="1-DEOXY-D-XYLULOSE 5-PHOSPHATE REDUCTOISOMERASE"/>
    <property type="match status" value="1"/>
</dbReference>
<dbReference type="PANTHER" id="PTHR30525:SF0">
    <property type="entry name" value="1-DEOXY-D-XYLULOSE 5-PHOSPHATE REDUCTOISOMERASE, CHLOROPLASTIC"/>
    <property type="match status" value="1"/>
</dbReference>
<dbReference type="Pfam" id="PF08436">
    <property type="entry name" value="DXP_redisom_C"/>
    <property type="match status" value="1"/>
</dbReference>
<dbReference type="Pfam" id="PF02670">
    <property type="entry name" value="DXP_reductoisom"/>
    <property type="match status" value="1"/>
</dbReference>
<dbReference type="Pfam" id="PF13288">
    <property type="entry name" value="DXPR_C"/>
    <property type="match status" value="1"/>
</dbReference>
<dbReference type="PIRSF" id="PIRSF006205">
    <property type="entry name" value="Dxp_reductismrs"/>
    <property type="match status" value="1"/>
</dbReference>
<dbReference type="SUPFAM" id="SSF69055">
    <property type="entry name" value="1-deoxy-D-xylulose-5-phosphate reductoisomerase, C-terminal domain"/>
    <property type="match status" value="1"/>
</dbReference>
<dbReference type="SUPFAM" id="SSF55347">
    <property type="entry name" value="Glyceraldehyde-3-phosphate dehydrogenase-like, C-terminal domain"/>
    <property type="match status" value="1"/>
</dbReference>
<dbReference type="SUPFAM" id="SSF51735">
    <property type="entry name" value="NAD(P)-binding Rossmann-fold domains"/>
    <property type="match status" value="1"/>
</dbReference>
<gene>
    <name evidence="1" type="primary">dxr</name>
    <name type="ordered locus">ABBFA_001475</name>
</gene>
<keyword id="KW-0002">3D-structure</keyword>
<keyword id="KW-0414">Isoprene biosynthesis</keyword>
<keyword id="KW-0464">Manganese</keyword>
<keyword id="KW-0479">Metal-binding</keyword>
<keyword id="KW-0521">NADP</keyword>
<keyword id="KW-0560">Oxidoreductase</keyword>
<organism>
    <name type="scientific">Acinetobacter baumannii (strain AB307-0294)</name>
    <dbReference type="NCBI Taxonomy" id="557600"/>
    <lineage>
        <taxon>Bacteria</taxon>
        <taxon>Pseudomonadati</taxon>
        <taxon>Pseudomonadota</taxon>
        <taxon>Gammaproteobacteria</taxon>
        <taxon>Moraxellales</taxon>
        <taxon>Moraxellaceae</taxon>
        <taxon>Acinetobacter</taxon>
        <taxon>Acinetobacter calcoaceticus/baumannii complex</taxon>
    </lineage>
</organism>
<evidence type="ECO:0000255" key="1">
    <source>
        <dbReference type="HAMAP-Rule" id="MF_00183"/>
    </source>
</evidence>
<evidence type="ECO:0007829" key="2">
    <source>
        <dbReference type="PDB" id="4ZN6"/>
    </source>
</evidence>
<protein>
    <recommendedName>
        <fullName evidence="1">1-deoxy-D-xylulose 5-phosphate reductoisomerase</fullName>
        <shortName evidence="1">DXP reductoisomerase</shortName>
        <ecNumber evidence="1">1.1.1.267</ecNumber>
    </recommendedName>
    <alternativeName>
        <fullName evidence="1">1-deoxyxylulose-5-phosphate reductoisomerase</fullName>
    </alternativeName>
    <alternativeName>
        <fullName evidence="1">2-C-methyl-D-erythritol 4-phosphate synthase</fullName>
    </alternativeName>
</protein>
<sequence length="398" mass="43022">MTQSVCILGVTGSIGRSTLKILGQHPDKYSVFAVSAHSRISELVEICKQFRPKVVVVPEQKIAELKTLFAQQNISDIDVLAGQEGLVDIASHTDVDIVMAAIVGAAGLLPTLAAVKAGKRVLLANKEALVMSGEIMMQAARDHQALLLPVDSEHNAIFQSLPHNYLQADRTGQPQLGVSKILLTASGGPFLNHSLEQLVHVTPQQACKHPNWSMGQKISVDSATLMNKGLELIEACHLFSISEHFVTVVVHPQSIIHSMVQYVDGSTLAQMGNPDMCTPIAHALAWPERLQTNVPALDLFEYSQLNFQAPDTQKFPALNLARQAMRAGGLAPTILNAANEIAVEAFLMERIGFTSIPQVVEHTLEKLENAAAESIECILDKDKVARSVAQQYISSIGG</sequence>
<reference key="1">
    <citation type="journal article" date="2008" name="J. Bacteriol.">
        <title>Comparative genome sequence analysis of multidrug-resistant Acinetobacter baumannii.</title>
        <authorList>
            <person name="Adams M.D."/>
            <person name="Goglin K."/>
            <person name="Molyneaux N."/>
            <person name="Hujer K.M."/>
            <person name="Lavender H."/>
            <person name="Jamison J.J."/>
            <person name="MacDonald I.J."/>
            <person name="Martin K.M."/>
            <person name="Russo T."/>
            <person name="Campagnari A.A."/>
            <person name="Hujer A.M."/>
            <person name="Bonomo R.A."/>
            <person name="Gill S.R."/>
        </authorList>
    </citation>
    <scope>NUCLEOTIDE SEQUENCE [LARGE SCALE GENOMIC DNA]</scope>
    <source>
        <strain>AB307-0294</strain>
    </source>
</reference>
<name>DXR_ACIB3</name>
<comment type="function">
    <text evidence="1">Catalyzes the NADPH-dependent rearrangement and reduction of 1-deoxy-D-xylulose-5-phosphate (DXP) to 2-C-methyl-D-erythritol 4-phosphate (MEP).</text>
</comment>
<comment type="catalytic activity">
    <reaction evidence="1">
        <text>2-C-methyl-D-erythritol 4-phosphate + NADP(+) = 1-deoxy-D-xylulose 5-phosphate + NADPH + H(+)</text>
        <dbReference type="Rhea" id="RHEA:13717"/>
        <dbReference type="ChEBI" id="CHEBI:15378"/>
        <dbReference type="ChEBI" id="CHEBI:57783"/>
        <dbReference type="ChEBI" id="CHEBI:57792"/>
        <dbReference type="ChEBI" id="CHEBI:58262"/>
        <dbReference type="ChEBI" id="CHEBI:58349"/>
        <dbReference type="EC" id="1.1.1.267"/>
    </reaction>
    <physiologicalReaction direction="right-to-left" evidence="1">
        <dbReference type="Rhea" id="RHEA:13719"/>
    </physiologicalReaction>
</comment>
<comment type="cofactor">
    <cofactor evidence="1">
        <name>Mg(2+)</name>
        <dbReference type="ChEBI" id="CHEBI:18420"/>
    </cofactor>
    <cofactor evidence="1">
        <name>Mn(2+)</name>
        <dbReference type="ChEBI" id="CHEBI:29035"/>
    </cofactor>
</comment>
<comment type="pathway">
    <text evidence="1">Isoprenoid biosynthesis; isopentenyl diphosphate biosynthesis via DXP pathway; isopentenyl diphosphate from 1-deoxy-D-xylulose 5-phosphate: step 1/6.</text>
</comment>
<comment type="similarity">
    <text evidence="1">Belongs to the DXR family.</text>
</comment>
<feature type="chain" id="PRO_1000118488" description="1-deoxy-D-xylulose 5-phosphate reductoisomerase">
    <location>
        <begin position="1"/>
        <end position="398"/>
    </location>
</feature>
<feature type="binding site" evidence="1">
    <location>
        <position position="11"/>
    </location>
    <ligand>
        <name>NADPH</name>
        <dbReference type="ChEBI" id="CHEBI:57783"/>
    </ligand>
</feature>
<feature type="binding site" evidence="1">
    <location>
        <position position="12"/>
    </location>
    <ligand>
        <name>NADPH</name>
        <dbReference type="ChEBI" id="CHEBI:57783"/>
    </ligand>
</feature>
<feature type="binding site" evidence="1">
    <location>
        <position position="13"/>
    </location>
    <ligand>
        <name>NADPH</name>
        <dbReference type="ChEBI" id="CHEBI:57783"/>
    </ligand>
</feature>
<feature type="binding site" evidence="1">
    <location>
        <position position="14"/>
    </location>
    <ligand>
        <name>NADPH</name>
        <dbReference type="ChEBI" id="CHEBI:57783"/>
    </ligand>
</feature>
<feature type="binding site" evidence="1">
    <location>
        <position position="125"/>
    </location>
    <ligand>
        <name>NADPH</name>
        <dbReference type="ChEBI" id="CHEBI:57783"/>
    </ligand>
</feature>
<feature type="binding site" evidence="1">
    <location>
        <position position="126"/>
    </location>
    <ligand>
        <name>1-deoxy-D-xylulose 5-phosphate</name>
        <dbReference type="ChEBI" id="CHEBI:57792"/>
    </ligand>
</feature>
<feature type="binding site" evidence="1">
    <location>
        <position position="127"/>
    </location>
    <ligand>
        <name>NADPH</name>
        <dbReference type="ChEBI" id="CHEBI:57783"/>
    </ligand>
</feature>
<feature type="binding site" evidence="1">
    <location>
        <position position="151"/>
    </location>
    <ligand>
        <name>Mn(2+)</name>
        <dbReference type="ChEBI" id="CHEBI:29035"/>
    </ligand>
</feature>
<feature type="binding site" evidence="1">
    <location>
        <position position="152"/>
    </location>
    <ligand>
        <name>1-deoxy-D-xylulose 5-phosphate</name>
        <dbReference type="ChEBI" id="CHEBI:57792"/>
    </ligand>
</feature>
<feature type="binding site" evidence="1">
    <location>
        <position position="153"/>
    </location>
    <ligand>
        <name>1-deoxy-D-xylulose 5-phosphate</name>
        <dbReference type="ChEBI" id="CHEBI:57792"/>
    </ligand>
</feature>
<feature type="binding site" evidence="1">
    <location>
        <position position="153"/>
    </location>
    <ligand>
        <name>Mn(2+)</name>
        <dbReference type="ChEBI" id="CHEBI:29035"/>
    </ligand>
</feature>
<feature type="binding site" evidence="1">
    <location>
        <position position="186"/>
    </location>
    <ligand>
        <name>1-deoxy-D-xylulose 5-phosphate</name>
        <dbReference type="ChEBI" id="CHEBI:57792"/>
    </ligand>
</feature>
<feature type="binding site" evidence="1">
    <location>
        <position position="209"/>
    </location>
    <ligand>
        <name>1-deoxy-D-xylulose 5-phosphate</name>
        <dbReference type="ChEBI" id="CHEBI:57792"/>
    </ligand>
</feature>
<feature type="binding site" evidence="1">
    <location>
        <position position="215"/>
    </location>
    <ligand>
        <name>NADPH</name>
        <dbReference type="ChEBI" id="CHEBI:57783"/>
    </ligand>
</feature>
<feature type="binding site" evidence="1">
    <location>
        <position position="222"/>
    </location>
    <ligand>
        <name>1-deoxy-D-xylulose 5-phosphate</name>
        <dbReference type="ChEBI" id="CHEBI:57792"/>
    </ligand>
</feature>
<feature type="binding site" evidence="1">
    <location>
        <position position="227"/>
    </location>
    <ligand>
        <name>1-deoxy-D-xylulose 5-phosphate</name>
        <dbReference type="ChEBI" id="CHEBI:57792"/>
    </ligand>
</feature>
<feature type="binding site" evidence="1">
    <location>
        <position position="228"/>
    </location>
    <ligand>
        <name>1-deoxy-D-xylulose 5-phosphate</name>
        <dbReference type="ChEBI" id="CHEBI:57792"/>
    </ligand>
</feature>
<feature type="binding site" evidence="1">
    <location>
        <position position="231"/>
    </location>
    <ligand>
        <name>1-deoxy-D-xylulose 5-phosphate</name>
        <dbReference type="ChEBI" id="CHEBI:57792"/>
    </ligand>
</feature>
<feature type="binding site" evidence="1">
    <location>
        <position position="231"/>
    </location>
    <ligand>
        <name>Mn(2+)</name>
        <dbReference type="ChEBI" id="CHEBI:29035"/>
    </ligand>
</feature>
<feature type="strand" evidence="2">
    <location>
        <begin position="3"/>
        <end position="9"/>
    </location>
</feature>
<feature type="helix" evidence="2">
    <location>
        <begin position="13"/>
        <end position="24"/>
    </location>
</feature>
<feature type="turn" evidence="2">
    <location>
        <begin position="26"/>
        <end position="28"/>
    </location>
</feature>
<feature type="strand" evidence="2">
    <location>
        <begin position="29"/>
        <end position="35"/>
    </location>
</feature>
<feature type="helix" evidence="2">
    <location>
        <begin position="40"/>
        <end position="50"/>
    </location>
</feature>
<feature type="strand" evidence="2">
    <location>
        <begin position="53"/>
        <end position="57"/>
    </location>
</feature>
<feature type="helix" evidence="2">
    <location>
        <begin position="59"/>
        <end position="61"/>
    </location>
</feature>
<feature type="helix" evidence="2">
    <location>
        <begin position="62"/>
        <end position="71"/>
    </location>
</feature>
<feature type="strand" evidence="2">
    <location>
        <begin position="78"/>
        <end position="81"/>
    </location>
</feature>
<feature type="helix" evidence="2">
    <location>
        <begin position="82"/>
        <end position="90"/>
    </location>
</feature>
<feature type="strand" evidence="2">
    <location>
        <begin position="97"/>
        <end position="100"/>
    </location>
</feature>
<feature type="helix" evidence="2">
    <location>
        <begin position="105"/>
        <end position="107"/>
    </location>
</feature>
<feature type="helix" evidence="2">
    <location>
        <begin position="108"/>
        <end position="116"/>
    </location>
</feature>
<feature type="strand" evidence="2">
    <location>
        <begin position="120"/>
        <end position="123"/>
    </location>
</feature>
<feature type="helix" evidence="2">
    <location>
        <begin position="127"/>
        <end position="130"/>
    </location>
</feature>
<feature type="helix" evidence="2">
    <location>
        <begin position="133"/>
        <end position="143"/>
    </location>
</feature>
<feature type="strand" evidence="2">
    <location>
        <begin position="146"/>
        <end position="149"/>
    </location>
</feature>
<feature type="helix" evidence="2">
    <location>
        <begin position="152"/>
        <end position="160"/>
    </location>
</feature>
<feature type="helix" evidence="2">
    <location>
        <begin position="165"/>
        <end position="167"/>
    </location>
</feature>
<feature type="strand" evidence="2">
    <location>
        <begin position="171"/>
        <end position="173"/>
    </location>
</feature>
<feature type="strand" evidence="2">
    <location>
        <begin position="178"/>
        <end position="185"/>
    </location>
</feature>
<feature type="turn" evidence="2">
    <location>
        <begin position="189"/>
        <end position="192"/>
    </location>
</feature>
<feature type="helix" evidence="2">
    <location>
        <begin position="195"/>
        <end position="199"/>
    </location>
</feature>
<feature type="helix" evidence="2">
    <location>
        <begin position="203"/>
        <end position="206"/>
    </location>
</feature>
<feature type="helix" evidence="2">
    <location>
        <begin position="216"/>
        <end position="224"/>
    </location>
</feature>
<feature type="helix" evidence="2">
    <location>
        <begin position="226"/>
        <end position="238"/>
    </location>
</feature>
<feature type="helix" evidence="2">
    <location>
        <begin position="243"/>
        <end position="245"/>
    </location>
</feature>
<feature type="strand" evidence="2">
    <location>
        <begin position="246"/>
        <end position="250"/>
    </location>
</feature>
<feature type="strand" evidence="2">
    <location>
        <begin position="256"/>
        <end position="262"/>
    </location>
</feature>
<feature type="strand" evidence="2">
    <location>
        <begin position="267"/>
        <end position="271"/>
    </location>
</feature>
<feature type="helix" evidence="2">
    <location>
        <begin position="277"/>
        <end position="285"/>
    </location>
</feature>
<feature type="turn" evidence="2">
    <location>
        <begin position="299"/>
        <end position="301"/>
    </location>
</feature>
<feature type="strand" evidence="2">
    <location>
        <begin position="304"/>
        <end position="306"/>
    </location>
</feature>
<feature type="turn" evidence="2">
    <location>
        <begin position="312"/>
        <end position="314"/>
    </location>
</feature>
<feature type="helix" evidence="2">
    <location>
        <begin position="317"/>
        <end position="327"/>
    </location>
</feature>
<feature type="helix" evidence="2">
    <location>
        <begin position="331"/>
        <end position="347"/>
    </location>
</feature>
<feature type="helix" evidence="2">
    <location>
        <begin position="355"/>
        <end position="366"/>
    </location>
</feature>
<feature type="helix" evidence="2">
    <location>
        <begin position="375"/>
        <end position="395"/>
    </location>
</feature>
<accession>B7H1U5</accession>
<proteinExistence type="evidence at protein level"/>